<feature type="chain" id="PRO_1000093341" description="Endonuclease MutS2">
    <location>
        <begin position="1"/>
        <end position="786"/>
    </location>
</feature>
<feature type="domain" description="Smr" evidence="1">
    <location>
        <begin position="711"/>
        <end position="786"/>
    </location>
</feature>
<feature type="region of interest" description="Disordered" evidence="2">
    <location>
        <begin position="529"/>
        <end position="549"/>
    </location>
</feature>
<feature type="binding site" evidence="1">
    <location>
        <begin position="335"/>
        <end position="342"/>
    </location>
    <ligand>
        <name>ATP</name>
        <dbReference type="ChEBI" id="CHEBI:30616"/>
    </ligand>
</feature>
<gene>
    <name evidence="1" type="primary">mutS2</name>
    <name evidence="1" type="synonym">rqcU</name>
    <name type="ordered locus">BcerKBAB4_4380</name>
</gene>
<name>MUTS2_BACMK</name>
<proteinExistence type="inferred from homology"/>
<evidence type="ECO:0000255" key="1">
    <source>
        <dbReference type="HAMAP-Rule" id="MF_00092"/>
    </source>
</evidence>
<evidence type="ECO:0000256" key="2">
    <source>
        <dbReference type="SAM" id="MobiDB-lite"/>
    </source>
</evidence>
<keyword id="KW-0067">ATP-binding</keyword>
<keyword id="KW-0238">DNA-binding</keyword>
<keyword id="KW-0255">Endonuclease</keyword>
<keyword id="KW-0378">Hydrolase</keyword>
<keyword id="KW-0540">Nuclease</keyword>
<keyword id="KW-0547">Nucleotide-binding</keyword>
<keyword id="KW-0694">RNA-binding</keyword>
<keyword id="KW-0699">rRNA-binding</keyword>
<protein>
    <recommendedName>
        <fullName evidence="1">Endonuclease MutS2</fullName>
        <ecNumber evidence="1">3.1.-.-</ecNumber>
    </recommendedName>
    <alternativeName>
        <fullName evidence="1">Ribosome-associated protein quality control-upstream factor</fullName>
        <shortName evidence="1">RQC-upstream factor</shortName>
        <shortName evidence="1">RqcU</shortName>
        <ecNumber evidence="1">3.6.4.-</ecNumber>
    </alternativeName>
</protein>
<sequence>MLERTLRVLEYNKVKEQLLEHTASSLGRDKVKNLVPSTDFEEIVELQETTDEAAKVIRLKGHVPLGGISDIRANIKRAKIGSMLSPHELIEIASTMYGSRQMKRFIDDMIDNGVELPILETHVAQIVSLYDLEKKITNCIGDGGEVVDSASDKLRGIRNQIRTAESRIREKLENMTRSSNAQKMLSDAIVTIRNERYVIPVKQEYRGVYGGIVHDQSASGQTLFIEPQVIVELNNALQEARVKEKQEVERILMMLTEEVAVEADIVLSNVEVVANLDFIFAKALYAKRIKATKPIVNNERYMDLKQARHPLIDPEIIVPNNIMLGKDFTTIVITGPNTGGKTVTLKTVGICVLMAQSGLHIPVMDESEICVFKNIFADIGDEQSIEQNLSTFSSHMVNIVDILEKADFESLVLFDELGAGTDPQEGAALAISILDEVCNRGARVVATTHYPELKAYGYNREQVINASVEFDVNTLSPTYKLLIGVPGRSNAFEISKRLGLSDRVIDRARNHISTDTNKIENMIAKLEESQKNAERERKEAEEHRKQSEKLHRELQRQIIEFNDERDEKLLKAQKEGEEKVEAAKQEAEGIIQELRQLRKAQLINVKDHELIEAKSRLEGAAPELVKKQKVNVKNTAPKQQLRSGDEVKVLTFGQKGQLLEKVSDTEWSVQIGILKMKVKESNMEYINTPKQTEKKAVASVKGRDYHVSLELDLRGERYEDAMMRVEKYLDDAQLASYPRVSIIHGKGTGALRQGVQDYLKKHRGVKTYRYGDMGEGGLGVTVVELK</sequence>
<dbReference type="EC" id="3.1.-.-" evidence="1"/>
<dbReference type="EC" id="3.6.4.-" evidence="1"/>
<dbReference type="EMBL" id="CP000903">
    <property type="protein sequence ID" value="ABY45539.1"/>
    <property type="molecule type" value="Genomic_DNA"/>
</dbReference>
<dbReference type="RefSeq" id="WP_012261787.1">
    <property type="nucleotide sequence ID" value="NC_010184.1"/>
</dbReference>
<dbReference type="SMR" id="A9VJL2"/>
<dbReference type="KEGG" id="bwe:BcerKBAB4_4380"/>
<dbReference type="eggNOG" id="COG1193">
    <property type="taxonomic scope" value="Bacteria"/>
</dbReference>
<dbReference type="HOGENOM" id="CLU_011252_2_1_9"/>
<dbReference type="Proteomes" id="UP000002154">
    <property type="component" value="Chromosome"/>
</dbReference>
<dbReference type="GO" id="GO:0005524">
    <property type="term" value="F:ATP binding"/>
    <property type="evidence" value="ECO:0007669"/>
    <property type="project" value="UniProtKB-UniRule"/>
</dbReference>
<dbReference type="GO" id="GO:0016887">
    <property type="term" value="F:ATP hydrolysis activity"/>
    <property type="evidence" value="ECO:0007669"/>
    <property type="project" value="InterPro"/>
</dbReference>
<dbReference type="GO" id="GO:0140664">
    <property type="term" value="F:ATP-dependent DNA damage sensor activity"/>
    <property type="evidence" value="ECO:0007669"/>
    <property type="project" value="InterPro"/>
</dbReference>
<dbReference type="GO" id="GO:0004519">
    <property type="term" value="F:endonuclease activity"/>
    <property type="evidence" value="ECO:0007669"/>
    <property type="project" value="UniProtKB-UniRule"/>
</dbReference>
<dbReference type="GO" id="GO:0030983">
    <property type="term" value="F:mismatched DNA binding"/>
    <property type="evidence" value="ECO:0007669"/>
    <property type="project" value="InterPro"/>
</dbReference>
<dbReference type="GO" id="GO:0043023">
    <property type="term" value="F:ribosomal large subunit binding"/>
    <property type="evidence" value="ECO:0007669"/>
    <property type="project" value="UniProtKB-UniRule"/>
</dbReference>
<dbReference type="GO" id="GO:0019843">
    <property type="term" value="F:rRNA binding"/>
    <property type="evidence" value="ECO:0007669"/>
    <property type="project" value="UniProtKB-UniRule"/>
</dbReference>
<dbReference type="GO" id="GO:0006298">
    <property type="term" value="P:mismatch repair"/>
    <property type="evidence" value="ECO:0007669"/>
    <property type="project" value="InterPro"/>
</dbReference>
<dbReference type="GO" id="GO:0045910">
    <property type="term" value="P:negative regulation of DNA recombination"/>
    <property type="evidence" value="ECO:0007669"/>
    <property type="project" value="InterPro"/>
</dbReference>
<dbReference type="GO" id="GO:0072344">
    <property type="term" value="P:rescue of stalled ribosome"/>
    <property type="evidence" value="ECO:0007669"/>
    <property type="project" value="UniProtKB-UniRule"/>
</dbReference>
<dbReference type="CDD" id="cd03280">
    <property type="entry name" value="ABC_MutS2"/>
    <property type="match status" value="1"/>
</dbReference>
<dbReference type="FunFam" id="3.40.50.300:FF:000830">
    <property type="entry name" value="Endonuclease MutS2"/>
    <property type="match status" value="1"/>
</dbReference>
<dbReference type="Gene3D" id="3.30.1370.110">
    <property type="match status" value="1"/>
</dbReference>
<dbReference type="Gene3D" id="3.40.50.300">
    <property type="entry name" value="P-loop containing nucleotide triphosphate hydrolases"/>
    <property type="match status" value="1"/>
</dbReference>
<dbReference type="HAMAP" id="MF_00092">
    <property type="entry name" value="MutS2"/>
    <property type="match status" value="1"/>
</dbReference>
<dbReference type="InterPro" id="IPR000432">
    <property type="entry name" value="DNA_mismatch_repair_MutS_C"/>
</dbReference>
<dbReference type="InterPro" id="IPR007696">
    <property type="entry name" value="DNA_mismatch_repair_MutS_core"/>
</dbReference>
<dbReference type="InterPro" id="IPR036187">
    <property type="entry name" value="DNA_mismatch_repair_MutS_sf"/>
</dbReference>
<dbReference type="InterPro" id="IPR046893">
    <property type="entry name" value="MSSS"/>
</dbReference>
<dbReference type="InterPro" id="IPR045076">
    <property type="entry name" value="MutS"/>
</dbReference>
<dbReference type="InterPro" id="IPR005747">
    <property type="entry name" value="MutS2"/>
</dbReference>
<dbReference type="InterPro" id="IPR027417">
    <property type="entry name" value="P-loop_NTPase"/>
</dbReference>
<dbReference type="InterPro" id="IPR002625">
    <property type="entry name" value="Smr_dom"/>
</dbReference>
<dbReference type="InterPro" id="IPR036063">
    <property type="entry name" value="Smr_dom_sf"/>
</dbReference>
<dbReference type="NCBIfam" id="TIGR01069">
    <property type="entry name" value="mutS2"/>
    <property type="match status" value="1"/>
</dbReference>
<dbReference type="PANTHER" id="PTHR48466:SF2">
    <property type="entry name" value="OS10G0509000 PROTEIN"/>
    <property type="match status" value="1"/>
</dbReference>
<dbReference type="PANTHER" id="PTHR48466">
    <property type="entry name" value="OS10G0509000 PROTEIN-RELATED"/>
    <property type="match status" value="1"/>
</dbReference>
<dbReference type="Pfam" id="PF20297">
    <property type="entry name" value="MSSS"/>
    <property type="match status" value="1"/>
</dbReference>
<dbReference type="Pfam" id="PF00488">
    <property type="entry name" value="MutS_V"/>
    <property type="match status" value="1"/>
</dbReference>
<dbReference type="Pfam" id="PF01713">
    <property type="entry name" value="Smr"/>
    <property type="match status" value="1"/>
</dbReference>
<dbReference type="PIRSF" id="PIRSF005814">
    <property type="entry name" value="MutS_YshD"/>
    <property type="match status" value="1"/>
</dbReference>
<dbReference type="SMART" id="SM00534">
    <property type="entry name" value="MUTSac"/>
    <property type="match status" value="1"/>
</dbReference>
<dbReference type="SMART" id="SM00533">
    <property type="entry name" value="MUTSd"/>
    <property type="match status" value="1"/>
</dbReference>
<dbReference type="SMART" id="SM00463">
    <property type="entry name" value="SMR"/>
    <property type="match status" value="1"/>
</dbReference>
<dbReference type="SUPFAM" id="SSF48334">
    <property type="entry name" value="DNA repair protein MutS, domain III"/>
    <property type="match status" value="1"/>
</dbReference>
<dbReference type="SUPFAM" id="SSF52540">
    <property type="entry name" value="P-loop containing nucleoside triphosphate hydrolases"/>
    <property type="match status" value="1"/>
</dbReference>
<dbReference type="SUPFAM" id="SSF160443">
    <property type="entry name" value="SMR domain-like"/>
    <property type="match status" value="1"/>
</dbReference>
<dbReference type="PROSITE" id="PS00486">
    <property type="entry name" value="DNA_MISMATCH_REPAIR_2"/>
    <property type="match status" value="1"/>
</dbReference>
<dbReference type="PROSITE" id="PS50828">
    <property type="entry name" value="SMR"/>
    <property type="match status" value="1"/>
</dbReference>
<reference key="1">
    <citation type="journal article" date="2008" name="Chem. Biol. Interact.">
        <title>Extending the Bacillus cereus group genomics to putative food-borne pathogens of different toxicity.</title>
        <authorList>
            <person name="Lapidus A."/>
            <person name="Goltsman E."/>
            <person name="Auger S."/>
            <person name="Galleron N."/>
            <person name="Segurens B."/>
            <person name="Dossat C."/>
            <person name="Land M.L."/>
            <person name="Broussolle V."/>
            <person name="Brillard J."/>
            <person name="Guinebretiere M.-H."/>
            <person name="Sanchis V."/>
            <person name="Nguen-the C."/>
            <person name="Lereclus D."/>
            <person name="Richardson P."/>
            <person name="Wincker P."/>
            <person name="Weissenbach J."/>
            <person name="Ehrlich S.D."/>
            <person name="Sorokin A."/>
        </authorList>
    </citation>
    <scope>NUCLEOTIDE SEQUENCE [LARGE SCALE GENOMIC DNA]</scope>
    <source>
        <strain>KBAB4</strain>
    </source>
</reference>
<organism>
    <name type="scientific">Bacillus mycoides (strain KBAB4)</name>
    <name type="common">Bacillus weihenstephanensis</name>
    <dbReference type="NCBI Taxonomy" id="315730"/>
    <lineage>
        <taxon>Bacteria</taxon>
        <taxon>Bacillati</taxon>
        <taxon>Bacillota</taxon>
        <taxon>Bacilli</taxon>
        <taxon>Bacillales</taxon>
        <taxon>Bacillaceae</taxon>
        <taxon>Bacillus</taxon>
        <taxon>Bacillus cereus group</taxon>
    </lineage>
</organism>
<comment type="function">
    <text evidence="1">Endonuclease that is involved in the suppression of homologous recombination and thus may have a key role in the control of bacterial genetic diversity.</text>
</comment>
<comment type="function">
    <text evidence="1">Acts as a ribosome collision sensor, splitting the ribosome into its 2 subunits. Detects stalled/collided 70S ribosomes which it binds and splits by an ATP-hydrolysis driven conformational change. Acts upstream of the ribosome quality control system (RQC), a ribosome-associated complex that mediates the extraction of incompletely synthesized nascent chains from stalled ribosomes and their subsequent degradation. Probably generates substrates for RQC.</text>
</comment>
<comment type="subunit">
    <text evidence="1">Homodimer. Binds to stalled ribosomes, contacting rRNA.</text>
</comment>
<comment type="similarity">
    <text evidence="1">Belongs to the DNA mismatch repair MutS family. MutS2 subfamily.</text>
</comment>
<accession>A9VJL2</accession>